<dbReference type="EMBL" id="AB001488">
    <property type="protein sequence ID" value="BAA19333.1"/>
    <property type="molecule type" value="Genomic_DNA"/>
</dbReference>
<dbReference type="EMBL" id="AL009126">
    <property type="protein sequence ID" value="CAB12303.1"/>
    <property type="molecule type" value="Genomic_DNA"/>
</dbReference>
<dbReference type="PIR" id="H69775">
    <property type="entry name" value="H69775"/>
</dbReference>
<dbReference type="SMR" id="P96644"/>
<dbReference type="FunCoup" id="P96644">
    <property type="interactions" value="185"/>
</dbReference>
<dbReference type="STRING" id="224308.BSU04960"/>
<dbReference type="PaxDb" id="224308-BSU04960"/>
<dbReference type="DNASU" id="938141"/>
<dbReference type="EnsemblBacteria" id="CAB12303">
    <property type="protein sequence ID" value="CAB12303"/>
    <property type="gene ID" value="BSU_04960"/>
</dbReference>
<dbReference type="GeneID" id="938141"/>
<dbReference type="KEGG" id="bsu:BSU04960"/>
<dbReference type="PATRIC" id="fig|224308.43.peg.517"/>
<dbReference type="eggNOG" id="COG5644">
    <property type="taxonomic scope" value="Bacteria"/>
</dbReference>
<dbReference type="InParanoid" id="P96644"/>
<dbReference type="OrthoDB" id="2366309at2"/>
<dbReference type="PhylomeDB" id="P96644"/>
<dbReference type="BioCyc" id="BSUB:BSU04960-MONOMER"/>
<dbReference type="Proteomes" id="UP000001570">
    <property type="component" value="Chromosome"/>
</dbReference>
<dbReference type="GO" id="GO:0005886">
    <property type="term" value="C:plasma membrane"/>
    <property type="evidence" value="ECO:0007669"/>
    <property type="project" value="UniProtKB-SubCell"/>
</dbReference>
<dbReference type="GO" id="GO:0055085">
    <property type="term" value="P:transmembrane transport"/>
    <property type="evidence" value="ECO:0007669"/>
    <property type="project" value="InterPro"/>
</dbReference>
<dbReference type="CDD" id="cd06261">
    <property type="entry name" value="TM_PBP2"/>
    <property type="match status" value="1"/>
</dbReference>
<dbReference type="InterPro" id="IPR000515">
    <property type="entry name" value="MetI-like"/>
</dbReference>
<dbReference type="NCBIfam" id="NF046089">
    <property type="entry name" value="CD3337_EF1877"/>
    <property type="match status" value="1"/>
</dbReference>
<accession>P96644</accession>
<accession>Q797J4</accession>
<evidence type="ECO:0000255" key="1"/>
<evidence type="ECO:0000256" key="2">
    <source>
        <dbReference type="SAM" id="MobiDB-lite"/>
    </source>
</evidence>
<evidence type="ECO:0000305" key="3"/>
<name>YDDG_BACSU</name>
<comment type="subcellular location">
    <subcellularLocation>
        <location evidence="3">Cell membrane</location>
        <topology evidence="3">Multi-pass membrane protein</topology>
    </subcellularLocation>
</comment>
<sequence>MVVMKKKRILIVSAIVLLFLTVASAVTVFSADGDTTTQPKVEKAGGVELKVKRFPISRYQANNEASDDLIKGAFVGLTNVTFSFAGNIVRVVDTGMDILYNLQPIDEFANSITNVSKTVYKTLKKNFGEALFIFTCAYVVYLFCVRGSVKEAMRRSILFICVMVIGGLWMSNAGYYMKVLNALSVEAQGKLLTAGNGLVGIVQDEGNFADSSAIEKGKEMEGTVAVMRNLYFDIALMKPFLIVNFDETSEKKINEEDTDKGGLNRIDKLLSYKLSEDGEKDKKDYIKETEIDDYKNESMTSGNVFNQLGESFIAVVASIVIGIPFLALAFFNFLLQVVALVIVFFVPFAFILAYVPQLAYSGFVTLGRLGSVYLLKAMLGVIVLFVYVTCFIVDKLIPPNGFGMYLLNVAVLASILWIGFHKRDAIIKFVTAGKVVSVDNNMMENMRQNIVQPAWEQAKKIGGVWGNGGGVFTDFTKHFGGRKDGSNADGVTGAPSGGGNSPSGTAMGYDNTHAISRTPQKETANGIANHNSRSLKRNPQTLSKEQEKQKQKEAFANAKENKQQSHLARLRKDGINSPMLKDALNEGNEDLSKRAPILQDKKDESARTDQKEYVEQLLKQPNNQQQTDDASLQHEEESTSNRAPVLQENEKDTERTDQKAYIYDEQNQNLETDQQQDFEVQKDDSVSNSEPVAQEKTAEIKRSDQKVMMNQPEPQLGFESPQSTKVENQPIANNERKIRPSEPAKVHSDGIRVDEKQAVAPAENKTVSREKQPSSQTIKRTEQSVNSFDQVSLNEIARRSSSKVEDRLRRDERTR</sequence>
<gene>
    <name type="primary">yddG</name>
    <name type="ordered locus">BSU04960</name>
</gene>
<organism>
    <name type="scientific">Bacillus subtilis (strain 168)</name>
    <dbReference type="NCBI Taxonomy" id="224308"/>
    <lineage>
        <taxon>Bacteria</taxon>
        <taxon>Bacillati</taxon>
        <taxon>Bacillota</taxon>
        <taxon>Bacilli</taxon>
        <taxon>Bacillales</taxon>
        <taxon>Bacillaceae</taxon>
        <taxon>Bacillus</taxon>
    </lineage>
</organism>
<protein>
    <recommendedName>
        <fullName>Uncharacterized membrane protein YddG</fullName>
    </recommendedName>
</protein>
<feature type="signal peptide" evidence="1">
    <location>
        <begin position="1"/>
        <end position="25"/>
    </location>
</feature>
<feature type="chain" id="PRO_0000375903" description="Uncharacterized membrane protein YddG">
    <location>
        <begin position="26"/>
        <end position="815"/>
    </location>
</feature>
<feature type="transmembrane region" description="Helical" evidence="1">
    <location>
        <begin position="127"/>
        <end position="147"/>
    </location>
</feature>
<feature type="transmembrane region" description="Helical" evidence="1">
    <location>
        <begin position="157"/>
        <end position="177"/>
    </location>
</feature>
<feature type="transmembrane region" description="Helical" evidence="1">
    <location>
        <begin position="311"/>
        <end position="331"/>
    </location>
</feature>
<feature type="transmembrane region" description="Helical" evidence="1">
    <location>
        <begin position="333"/>
        <end position="353"/>
    </location>
</feature>
<feature type="transmembrane region" description="Helical" evidence="1">
    <location>
        <begin position="372"/>
        <end position="392"/>
    </location>
</feature>
<feature type="transmembrane region" description="Helical" evidence="1">
    <location>
        <begin position="401"/>
        <end position="421"/>
    </location>
</feature>
<feature type="region of interest" description="Disordered" evidence="2">
    <location>
        <begin position="483"/>
        <end position="815"/>
    </location>
</feature>
<feature type="compositionally biased region" description="Polar residues" evidence="2">
    <location>
        <begin position="513"/>
        <end position="543"/>
    </location>
</feature>
<feature type="compositionally biased region" description="Basic and acidic residues" evidence="2">
    <location>
        <begin position="544"/>
        <end position="563"/>
    </location>
</feature>
<feature type="compositionally biased region" description="Basic and acidic residues" evidence="2">
    <location>
        <begin position="599"/>
        <end position="614"/>
    </location>
</feature>
<feature type="compositionally biased region" description="Polar residues" evidence="2">
    <location>
        <begin position="619"/>
        <end position="630"/>
    </location>
</feature>
<feature type="compositionally biased region" description="Basic and acidic residues" evidence="2">
    <location>
        <begin position="648"/>
        <end position="658"/>
    </location>
</feature>
<feature type="compositionally biased region" description="Polar residues" evidence="2">
    <location>
        <begin position="665"/>
        <end position="678"/>
    </location>
</feature>
<feature type="compositionally biased region" description="Basic and acidic residues" evidence="2">
    <location>
        <begin position="696"/>
        <end position="705"/>
    </location>
</feature>
<feature type="compositionally biased region" description="Polar residues" evidence="2">
    <location>
        <begin position="720"/>
        <end position="732"/>
    </location>
</feature>
<feature type="compositionally biased region" description="Basic and acidic residues" evidence="2">
    <location>
        <begin position="734"/>
        <end position="757"/>
    </location>
</feature>
<feature type="compositionally biased region" description="Polar residues" evidence="2">
    <location>
        <begin position="773"/>
        <end position="793"/>
    </location>
</feature>
<feature type="compositionally biased region" description="Basic and acidic residues" evidence="2">
    <location>
        <begin position="796"/>
        <end position="815"/>
    </location>
</feature>
<reference key="1">
    <citation type="submission" date="1997-03" db="EMBL/GenBank/DDBJ databases">
        <title>A 148 kbp sequence of the region between 35 and 47 degree of the Bacillus subtilis genome.</title>
        <authorList>
            <person name="Kasahara Y."/>
            <person name="Nakai S."/>
            <person name="Lee S."/>
            <person name="Sadaie Y."/>
            <person name="Ogasawara N."/>
        </authorList>
    </citation>
    <scope>NUCLEOTIDE SEQUENCE [GENOMIC DNA]</scope>
    <source>
        <strain>168</strain>
    </source>
</reference>
<reference key="2">
    <citation type="journal article" date="1997" name="Nature">
        <title>The complete genome sequence of the Gram-positive bacterium Bacillus subtilis.</title>
        <authorList>
            <person name="Kunst F."/>
            <person name="Ogasawara N."/>
            <person name="Moszer I."/>
            <person name="Albertini A.M."/>
            <person name="Alloni G."/>
            <person name="Azevedo V."/>
            <person name="Bertero M.G."/>
            <person name="Bessieres P."/>
            <person name="Bolotin A."/>
            <person name="Borchert S."/>
            <person name="Borriss R."/>
            <person name="Boursier L."/>
            <person name="Brans A."/>
            <person name="Braun M."/>
            <person name="Brignell S.C."/>
            <person name="Bron S."/>
            <person name="Brouillet S."/>
            <person name="Bruschi C.V."/>
            <person name="Caldwell B."/>
            <person name="Capuano V."/>
            <person name="Carter N.M."/>
            <person name="Choi S.-K."/>
            <person name="Codani J.-J."/>
            <person name="Connerton I.F."/>
            <person name="Cummings N.J."/>
            <person name="Daniel R.A."/>
            <person name="Denizot F."/>
            <person name="Devine K.M."/>
            <person name="Duesterhoeft A."/>
            <person name="Ehrlich S.D."/>
            <person name="Emmerson P.T."/>
            <person name="Entian K.-D."/>
            <person name="Errington J."/>
            <person name="Fabret C."/>
            <person name="Ferrari E."/>
            <person name="Foulger D."/>
            <person name="Fritz C."/>
            <person name="Fujita M."/>
            <person name="Fujita Y."/>
            <person name="Fuma S."/>
            <person name="Galizzi A."/>
            <person name="Galleron N."/>
            <person name="Ghim S.-Y."/>
            <person name="Glaser P."/>
            <person name="Goffeau A."/>
            <person name="Golightly E.J."/>
            <person name="Grandi G."/>
            <person name="Guiseppi G."/>
            <person name="Guy B.J."/>
            <person name="Haga K."/>
            <person name="Haiech J."/>
            <person name="Harwood C.R."/>
            <person name="Henaut A."/>
            <person name="Hilbert H."/>
            <person name="Holsappel S."/>
            <person name="Hosono S."/>
            <person name="Hullo M.-F."/>
            <person name="Itaya M."/>
            <person name="Jones L.-M."/>
            <person name="Joris B."/>
            <person name="Karamata D."/>
            <person name="Kasahara Y."/>
            <person name="Klaerr-Blanchard M."/>
            <person name="Klein C."/>
            <person name="Kobayashi Y."/>
            <person name="Koetter P."/>
            <person name="Koningstein G."/>
            <person name="Krogh S."/>
            <person name="Kumano M."/>
            <person name="Kurita K."/>
            <person name="Lapidus A."/>
            <person name="Lardinois S."/>
            <person name="Lauber J."/>
            <person name="Lazarevic V."/>
            <person name="Lee S.-M."/>
            <person name="Levine A."/>
            <person name="Liu H."/>
            <person name="Masuda S."/>
            <person name="Mauel C."/>
            <person name="Medigue C."/>
            <person name="Medina N."/>
            <person name="Mellado R.P."/>
            <person name="Mizuno M."/>
            <person name="Moestl D."/>
            <person name="Nakai S."/>
            <person name="Noback M."/>
            <person name="Noone D."/>
            <person name="O'Reilly M."/>
            <person name="Ogawa K."/>
            <person name="Ogiwara A."/>
            <person name="Oudega B."/>
            <person name="Park S.-H."/>
            <person name="Parro V."/>
            <person name="Pohl T.M."/>
            <person name="Portetelle D."/>
            <person name="Porwollik S."/>
            <person name="Prescott A.M."/>
            <person name="Presecan E."/>
            <person name="Pujic P."/>
            <person name="Purnelle B."/>
            <person name="Rapoport G."/>
            <person name="Rey M."/>
            <person name="Reynolds S."/>
            <person name="Rieger M."/>
            <person name="Rivolta C."/>
            <person name="Rocha E."/>
            <person name="Roche B."/>
            <person name="Rose M."/>
            <person name="Sadaie Y."/>
            <person name="Sato T."/>
            <person name="Scanlan E."/>
            <person name="Schleich S."/>
            <person name="Schroeter R."/>
            <person name="Scoffone F."/>
            <person name="Sekiguchi J."/>
            <person name="Sekowska A."/>
            <person name="Seror S.J."/>
            <person name="Serror P."/>
            <person name="Shin B.-S."/>
            <person name="Soldo B."/>
            <person name="Sorokin A."/>
            <person name="Tacconi E."/>
            <person name="Takagi T."/>
            <person name="Takahashi H."/>
            <person name="Takemaru K."/>
            <person name="Takeuchi M."/>
            <person name="Tamakoshi A."/>
            <person name="Tanaka T."/>
            <person name="Terpstra P."/>
            <person name="Tognoni A."/>
            <person name="Tosato V."/>
            <person name="Uchiyama S."/>
            <person name="Vandenbol M."/>
            <person name="Vannier F."/>
            <person name="Vassarotti A."/>
            <person name="Viari A."/>
            <person name="Wambutt R."/>
            <person name="Wedler E."/>
            <person name="Wedler H."/>
            <person name="Weitzenegger T."/>
            <person name="Winters P."/>
            <person name="Wipat A."/>
            <person name="Yamamoto H."/>
            <person name="Yamane K."/>
            <person name="Yasumoto K."/>
            <person name="Yata K."/>
            <person name="Yoshida K."/>
            <person name="Yoshikawa H.-F."/>
            <person name="Zumstein E."/>
            <person name="Yoshikawa H."/>
            <person name="Danchin A."/>
        </authorList>
    </citation>
    <scope>NUCLEOTIDE SEQUENCE [LARGE SCALE GENOMIC DNA]</scope>
    <source>
        <strain>168</strain>
    </source>
</reference>
<keyword id="KW-1003">Cell membrane</keyword>
<keyword id="KW-0472">Membrane</keyword>
<keyword id="KW-1185">Reference proteome</keyword>
<keyword id="KW-0732">Signal</keyword>
<keyword id="KW-0812">Transmembrane</keyword>
<keyword id="KW-1133">Transmembrane helix</keyword>
<proteinExistence type="inferred from homology"/>